<protein>
    <recommendedName>
        <fullName evidence="1">Methionine--tRNA ligase</fullName>
        <ecNumber evidence="1">6.1.1.10</ecNumber>
    </recommendedName>
    <alternativeName>
        <fullName evidence="1">Methionyl-tRNA synthetase</fullName>
        <shortName evidence="1">MetRS</shortName>
    </alternativeName>
</protein>
<reference key="1">
    <citation type="journal article" date="2002" name="DNA Res.">
        <title>Complete genome structure of the thermophilic cyanobacterium Thermosynechococcus elongatus BP-1.</title>
        <authorList>
            <person name="Nakamura Y."/>
            <person name="Kaneko T."/>
            <person name="Sato S."/>
            <person name="Ikeuchi M."/>
            <person name="Katoh H."/>
            <person name="Sasamoto S."/>
            <person name="Watanabe A."/>
            <person name="Iriguchi M."/>
            <person name="Kawashima K."/>
            <person name="Kimura T."/>
            <person name="Kishida Y."/>
            <person name="Kiyokawa C."/>
            <person name="Kohara M."/>
            <person name="Matsumoto M."/>
            <person name="Matsuno A."/>
            <person name="Nakazaki N."/>
            <person name="Shimpo S."/>
            <person name="Sugimoto M."/>
            <person name="Takeuchi C."/>
            <person name="Yamada M."/>
            <person name="Tabata S."/>
        </authorList>
    </citation>
    <scope>NUCLEOTIDE SEQUENCE [LARGE SCALE GENOMIC DNA]</scope>
    <source>
        <strain>NIES-2133 / IAM M-273 / BP-1</strain>
    </source>
</reference>
<name>SYM_THEVB</name>
<gene>
    <name evidence="1" type="primary">metG</name>
    <name type="synonym">metS</name>
    <name type="ordered locus">tlr0750</name>
</gene>
<proteinExistence type="inferred from homology"/>
<accession>P59081</accession>
<evidence type="ECO:0000255" key="1">
    <source>
        <dbReference type="HAMAP-Rule" id="MF_01228"/>
    </source>
</evidence>
<feature type="chain" id="PRO_0000139260" description="Methionine--tRNA ligase">
    <location>
        <begin position="1"/>
        <end position="529"/>
    </location>
</feature>
<feature type="short sequence motif" description="'HIGH' region">
    <location>
        <begin position="12"/>
        <end position="22"/>
    </location>
</feature>
<feature type="short sequence motif" description="'KMSKS' region">
    <location>
        <begin position="301"/>
        <end position="305"/>
    </location>
</feature>
<feature type="binding site" evidence="1">
    <location>
        <position position="127"/>
    </location>
    <ligand>
        <name>Zn(2+)</name>
        <dbReference type="ChEBI" id="CHEBI:29105"/>
    </ligand>
</feature>
<feature type="binding site" evidence="1">
    <location>
        <position position="130"/>
    </location>
    <ligand>
        <name>Zn(2+)</name>
        <dbReference type="ChEBI" id="CHEBI:29105"/>
    </ligand>
</feature>
<feature type="binding site" evidence="1">
    <location>
        <position position="145"/>
    </location>
    <ligand>
        <name>Zn(2+)</name>
        <dbReference type="ChEBI" id="CHEBI:29105"/>
    </ligand>
</feature>
<feature type="binding site" evidence="1">
    <location>
        <position position="148"/>
    </location>
    <ligand>
        <name>Zn(2+)</name>
        <dbReference type="ChEBI" id="CHEBI:29105"/>
    </ligand>
</feature>
<feature type="binding site" evidence="1">
    <location>
        <position position="304"/>
    </location>
    <ligand>
        <name>ATP</name>
        <dbReference type="ChEBI" id="CHEBI:30616"/>
    </ligand>
</feature>
<comment type="function">
    <text evidence="1">Is required not only for elongation of protein synthesis but also for the initiation of all mRNA translation through initiator tRNA(fMet) aminoacylation.</text>
</comment>
<comment type="catalytic activity">
    <reaction evidence="1">
        <text>tRNA(Met) + L-methionine + ATP = L-methionyl-tRNA(Met) + AMP + diphosphate</text>
        <dbReference type="Rhea" id="RHEA:13481"/>
        <dbReference type="Rhea" id="RHEA-COMP:9667"/>
        <dbReference type="Rhea" id="RHEA-COMP:9698"/>
        <dbReference type="ChEBI" id="CHEBI:30616"/>
        <dbReference type="ChEBI" id="CHEBI:33019"/>
        <dbReference type="ChEBI" id="CHEBI:57844"/>
        <dbReference type="ChEBI" id="CHEBI:78442"/>
        <dbReference type="ChEBI" id="CHEBI:78530"/>
        <dbReference type="ChEBI" id="CHEBI:456215"/>
        <dbReference type="EC" id="6.1.1.10"/>
    </reaction>
</comment>
<comment type="cofactor">
    <cofactor evidence="1">
        <name>Zn(2+)</name>
        <dbReference type="ChEBI" id="CHEBI:29105"/>
    </cofactor>
    <text evidence="1">Binds 1 zinc ion per subunit.</text>
</comment>
<comment type="subunit">
    <text evidence="1">Monomer.</text>
</comment>
<comment type="subcellular location">
    <subcellularLocation>
        <location evidence="1">Cytoplasm</location>
    </subcellularLocation>
</comment>
<comment type="similarity">
    <text evidence="1">Belongs to the class-I aminoacyl-tRNA synthetase family. MetG type 2A subfamily.</text>
</comment>
<organism>
    <name type="scientific">Thermosynechococcus vestitus (strain NIES-2133 / IAM M-273 / BP-1)</name>
    <dbReference type="NCBI Taxonomy" id="197221"/>
    <lineage>
        <taxon>Bacteria</taxon>
        <taxon>Bacillati</taxon>
        <taxon>Cyanobacteriota</taxon>
        <taxon>Cyanophyceae</taxon>
        <taxon>Acaryochloridales</taxon>
        <taxon>Thermosynechococcaceae</taxon>
        <taxon>Thermosynechococcus</taxon>
    </lineage>
</organism>
<dbReference type="EC" id="6.1.1.10" evidence="1"/>
<dbReference type="EMBL" id="BA000039">
    <property type="protein sequence ID" value="BAC08301.1"/>
    <property type="molecule type" value="Genomic_DNA"/>
</dbReference>
<dbReference type="RefSeq" id="NP_681539.1">
    <property type="nucleotide sequence ID" value="NC_004113.1"/>
</dbReference>
<dbReference type="RefSeq" id="WP_011056597.1">
    <property type="nucleotide sequence ID" value="NC_004113.1"/>
</dbReference>
<dbReference type="SMR" id="P59081"/>
<dbReference type="STRING" id="197221.gene:10747341"/>
<dbReference type="EnsemblBacteria" id="BAC08301">
    <property type="protein sequence ID" value="BAC08301"/>
    <property type="gene ID" value="BAC08301"/>
</dbReference>
<dbReference type="KEGG" id="tel:tlr0750"/>
<dbReference type="PATRIC" id="fig|197221.4.peg.790"/>
<dbReference type="eggNOG" id="COG0143">
    <property type="taxonomic scope" value="Bacteria"/>
</dbReference>
<dbReference type="Proteomes" id="UP000000440">
    <property type="component" value="Chromosome"/>
</dbReference>
<dbReference type="GO" id="GO:0005737">
    <property type="term" value="C:cytoplasm"/>
    <property type="evidence" value="ECO:0007669"/>
    <property type="project" value="UniProtKB-SubCell"/>
</dbReference>
<dbReference type="GO" id="GO:0005524">
    <property type="term" value="F:ATP binding"/>
    <property type="evidence" value="ECO:0007669"/>
    <property type="project" value="UniProtKB-UniRule"/>
</dbReference>
<dbReference type="GO" id="GO:0046872">
    <property type="term" value="F:metal ion binding"/>
    <property type="evidence" value="ECO:0007669"/>
    <property type="project" value="UniProtKB-KW"/>
</dbReference>
<dbReference type="GO" id="GO:0004825">
    <property type="term" value="F:methionine-tRNA ligase activity"/>
    <property type="evidence" value="ECO:0007669"/>
    <property type="project" value="UniProtKB-UniRule"/>
</dbReference>
<dbReference type="GO" id="GO:0006431">
    <property type="term" value="P:methionyl-tRNA aminoacylation"/>
    <property type="evidence" value="ECO:0007669"/>
    <property type="project" value="UniProtKB-UniRule"/>
</dbReference>
<dbReference type="CDD" id="cd07957">
    <property type="entry name" value="Anticodon_Ia_Met"/>
    <property type="match status" value="1"/>
</dbReference>
<dbReference type="CDD" id="cd00814">
    <property type="entry name" value="MetRS_core"/>
    <property type="match status" value="1"/>
</dbReference>
<dbReference type="FunFam" id="2.170.220.10:FF:000001">
    <property type="entry name" value="methionine--tRNA ligase, mitochondrial"/>
    <property type="match status" value="1"/>
</dbReference>
<dbReference type="Gene3D" id="2.170.220.10">
    <property type="match status" value="1"/>
</dbReference>
<dbReference type="Gene3D" id="3.40.50.620">
    <property type="entry name" value="HUPs"/>
    <property type="match status" value="1"/>
</dbReference>
<dbReference type="Gene3D" id="1.10.730.10">
    <property type="entry name" value="Isoleucyl-tRNA Synthetase, Domain 1"/>
    <property type="match status" value="1"/>
</dbReference>
<dbReference type="HAMAP" id="MF_01228">
    <property type="entry name" value="Met_tRNA_synth_type2"/>
    <property type="match status" value="1"/>
</dbReference>
<dbReference type="InterPro" id="IPR041872">
    <property type="entry name" value="Anticodon_Met"/>
</dbReference>
<dbReference type="InterPro" id="IPR014758">
    <property type="entry name" value="Met-tRNA_synth"/>
</dbReference>
<dbReference type="InterPro" id="IPR023457">
    <property type="entry name" value="Met-tRNA_synth_2"/>
</dbReference>
<dbReference type="InterPro" id="IPR015413">
    <property type="entry name" value="Methionyl/Leucyl_tRNA_Synth"/>
</dbReference>
<dbReference type="InterPro" id="IPR033911">
    <property type="entry name" value="MetRS_core"/>
</dbReference>
<dbReference type="InterPro" id="IPR014729">
    <property type="entry name" value="Rossmann-like_a/b/a_fold"/>
</dbReference>
<dbReference type="InterPro" id="IPR032678">
    <property type="entry name" value="tRNA-synt_1_cat_dom"/>
</dbReference>
<dbReference type="InterPro" id="IPR009080">
    <property type="entry name" value="tRNAsynth_Ia_anticodon-bd"/>
</dbReference>
<dbReference type="NCBIfam" id="TIGR00398">
    <property type="entry name" value="metG"/>
    <property type="match status" value="1"/>
</dbReference>
<dbReference type="NCBIfam" id="NF008900">
    <property type="entry name" value="PRK12267.1"/>
    <property type="match status" value="1"/>
</dbReference>
<dbReference type="PANTHER" id="PTHR43326:SF1">
    <property type="entry name" value="METHIONINE--TRNA LIGASE, MITOCHONDRIAL"/>
    <property type="match status" value="1"/>
</dbReference>
<dbReference type="PANTHER" id="PTHR43326">
    <property type="entry name" value="METHIONYL-TRNA SYNTHETASE"/>
    <property type="match status" value="1"/>
</dbReference>
<dbReference type="Pfam" id="PF19303">
    <property type="entry name" value="Anticodon_3"/>
    <property type="match status" value="1"/>
</dbReference>
<dbReference type="Pfam" id="PF01406">
    <property type="entry name" value="tRNA-synt_1e"/>
    <property type="match status" value="1"/>
</dbReference>
<dbReference type="Pfam" id="PF09334">
    <property type="entry name" value="tRNA-synt_1g"/>
    <property type="match status" value="1"/>
</dbReference>
<dbReference type="PRINTS" id="PR01041">
    <property type="entry name" value="TRNASYNTHMET"/>
</dbReference>
<dbReference type="SUPFAM" id="SSF47323">
    <property type="entry name" value="Anticodon-binding domain of a subclass of class I aminoacyl-tRNA synthetases"/>
    <property type="match status" value="1"/>
</dbReference>
<dbReference type="SUPFAM" id="SSF52374">
    <property type="entry name" value="Nucleotidylyl transferase"/>
    <property type="match status" value="1"/>
</dbReference>
<sequence length="529" mass="60336">MSPHFSLTTPLYYVNALPHIGSAYTTIAADVLARFYRLQGYQVRFITGTDEHGQKIERTAQQRGLSPQAHCDEIAAGFQALWQQLNIHYDRFSRTTSPRHHAIVNEFFQRVWDNGDIYLGQQQGWYCVECEEFKEERELLEGRRCPIHVNRTVEWRDERNYFFRLSKYQQALLDHYAEHPDFVQPPSRRNEVLSFIERGLQDFSISRVNLAWGFPVPTDPEQTLYVWFDALLGYVTALLEPEDEPTLANALKTWWPINLHIIGKDILRFHGISWPAMLMSAGLPLPEQIFVHGFLTKDGQKMGKSLGNTLDPFALVAQYGADAVRYYFMKEVEFGRDGDFSETRFVTILNADLANDLGNLLNRTLKMAWKYTDGKVPNVQGAAIPREHPLRQLAEHLSQTYGQGYRQLAFHEVCQQALTLARAGNKFLDEEAPWKRYRAGETAAVAEILYCVLESVRLVAYVLAPIIPQLSEAIYGQLGYSIRFNGSIAPDLLGDRQAQWGVLPASQPLANPEPIFQKLLLPATVADSP</sequence>
<keyword id="KW-0030">Aminoacyl-tRNA synthetase</keyword>
<keyword id="KW-0067">ATP-binding</keyword>
<keyword id="KW-0963">Cytoplasm</keyword>
<keyword id="KW-0436">Ligase</keyword>
<keyword id="KW-0479">Metal-binding</keyword>
<keyword id="KW-0547">Nucleotide-binding</keyword>
<keyword id="KW-0648">Protein biosynthesis</keyword>
<keyword id="KW-1185">Reference proteome</keyword>
<keyword id="KW-0862">Zinc</keyword>